<name>RPO10_HALMA</name>
<dbReference type="EC" id="2.7.7.6" evidence="1"/>
<dbReference type="EMBL" id="M76567">
    <property type="protein sequence ID" value="AAA73099.1"/>
    <property type="molecule type" value="Genomic_DNA"/>
</dbReference>
<dbReference type="EMBL" id="AY596297">
    <property type="protein sequence ID" value="AAV45147.1"/>
    <property type="molecule type" value="Genomic_DNA"/>
</dbReference>
<dbReference type="PIR" id="D41715">
    <property type="entry name" value="D41715"/>
</dbReference>
<dbReference type="RefSeq" id="WP_004516797.1">
    <property type="nucleotide sequence ID" value="NZ_CP039138.1"/>
</dbReference>
<dbReference type="SMR" id="P29199"/>
<dbReference type="STRING" id="272569.rrnAC0067"/>
<dbReference type="PaxDb" id="272569-rrnAC0067"/>
<dbReference type="EnsemblBacteria" id="AAV45147">
    <property type="protein sequence ID" value="AAV45147"/>
    <property type="gene ID" value="rrnAC0067"/>
</dbReference>
<dbReference type="KEGG" id="hma:rrnAC0067"/>
<dbReference type="PATRIC" id="fig|272569.17.peg.875"/>
<dbReference type="eggNOG" id="arCOG04244">
    <property type="taxonomic scope" value="Archaea"/>
</dbReference>
<dbReference type="HOGENOM" id="CLU_143122_1_1_2"/>
<dbReference type="Proteomes" id="UP000001169">
    <property type="component" value="Chromosome I"/>
</dbReference>
<dbReference type="GO" id="GO:0005737">
    <property type="term" value="C:cytoplasm"/>
    <property type="evidence" value="ECO:0007669"/>
    <property type="project" value="UniProtKB-SubCell"/>
</dbReference>
<dbReference type="GO" id="GO:0000428">
    <property type="term" value="C:DNA-directed RNA polymerase complex"/>
    <property type="evidence" value="ECO:0007669"/>
    <property type="project" value="UniProtKB-KW"/>
</dbReference>
<dbReference type="GO" id="GO:0003677">
    <property type="term" value="F:DNA binding"/>
    <property type="evidence" value="ECO:0007669"/>
    <property type="project" value="InterPro"/>
</dbReference>
<dbReference type="GO" id="GO:0003899">
    <property type="term" value="F:DNA-directed RNA polymerase activity"/>
    <property type="evidence" value="ECO:0007669"/>
    <property type="project" value="UniProtKB-UniRule"/>
</dbReference>
<dbReference type="GO" id="GO:0008270">
    <property type="term" value="F:zinc ion binding"/>
    <property type="evidence" value="ECO:0007669"/>
    <property type="project" value="UniProtKB-UniRule"/>
</dbReference>
<dbReference type="GO" id="GO:0006351">
    <property type="term" value="P:DNA-templated transcription"/>
    <property type="evidence" value="ECO:0007669"/>
    <property type="project" value="UniProtKB-UniRule"/>
</dbReference>
<dbReference type="FunFam" id="1.10.10.60:FF:000335">
    <property type="entry name" value="DNA-directed RNA polymerase subunit N, putative"/>
    <property type="match status" value="1"/>
</dbReference>
<dbReference type="Gene3D" id="1.10.10.60">
    <property type="entry name" value="Homeodomain-like"/>
    <property type="match status" value="1"/>
</dbReference>
<dbReference type="HAMAP" id="MF_00250">
    <property type="entry name" value="RNApol_arch_Rpo10"/>
    <property type="match status" value="1"/>
</dbReference>
<dbReference type="InterPro" id="IPR023580">
    <property type="entry name" value="RNA_pol_su_RPB10"/>
</dbReference>
<dbReference type="InterPro" id="IPR020789">
    <property type="entry name" value="RNA_pol_suN_Zn-BS"/>
</dbReference>
<dbReference type="InterPro" id="IPR000268">
    <property type="entry name" value="RPABC5/Rpb10"/>
</dbReference>
<dbReference type="NCBIfam" id="NF003089">
    <property type="entry name" value="PRK04016.1"/>
    <property type="match status" value="1"/>
</dbReference>
<dbReference type="PANTHER" id="PTHR23431:SF3">
    <property type="entry name" value="DNA-DIRECTED RNA POLYMERASES I, II, AND III SUBUNIT RPABC5"/>
    <property type="match status" value="1"/>
</dbReference>
<dbReference type="PANTHER" id="PTHR23431">
    <property type="entry name" value="DNA-DIRECTED RNA POLYMERASES I, II, AND III SUBUNIT RPABC5 FAMILY MEMBER"/>
    <property type="match status" value="1"/>
</dbReference>
<dbReference type="Pfam" id="PF01194">
    <property type="entry name" value="RNA_pol_N"/>
    <property type="match status" value="1"/>
</dbReference>
<dbReference type="PIRSF" id="PIRSF005653">
    <property type="entry name" value="RNA_pol_N/8_sub"/>
    <property type="match status" value="1"/>
</dbReference>
<dbReference type="SUPFAM" id="SSF46924">
    <property type="entry name" value="RNA polymerase subunit RPB10"/>
    <property type="match status" value="1"/>
</dbReference>
<dbReference type="PROSITE" id="PS01112">
    <property type="entry name" value="RNA_POL_N_8KD"/>
    <property type="match status" value="1"/>
</dbReference>
<organism>
    <name type="scientific">Haloarcula marismortui (strain ATCC 43049 / DSM 3752 / JCM 8966 / VKM B-1809)</name>
    <name type="common">Halobacterium marismortui</name>
    <dbReference type="NCBI Taxonomy" id="272569"/>
    <lineage>
        <taxon>Archaea</taxon>
        <taxon>Methanobacteriati</taxon>
        <taxon>Methanobacteriota</taxon>
        <taxon>Stenosarchaea group</taxon>
        <taxon>Halobacteria</taxon>
        <taxon>Halobacteriales</taxon>
        <taxon>Haloarculaceae</taxon>
        <taxon>Haloarcula</taxon>
    </lineage>
</organism>
<feature type="chain" id="PRO_0000121346" description="DNA-directed RNA polymerase subunit Rpo10">
    <location>
        <begin position="1"/>
        <end position="66"/>
    </location>
</feature>
<feature type="binding site" evidence="1">
    <location>
        <position position="7"/>
    </location>
    <ligand>
        <name>Zn(2+)</name>
        <dbReference type="ChEBI" id="CHEBI:29105"/>
    </ligand>
</feature>
<feature type="binding site" evidence="1">
    <location>
        <position position="10"/>
    </location>
    <ligand>
        <name>Zn(2+)</name>
        <dbReference type="ChEBI" id="CHEBI:29105"/>
    </ligand>
</feature>
<feature type="binding site" evidence="1">
    <location>
        <position position="47"/>
    </location>
    <ligand>
        <name>Zn(2+)</name>
        <dbReference type="ChEBI" id="CHEBI:29105"/>
    </ligand>
</feature>
<feature type="binding site" evidence="1">
    <location>
        <position position="48"/>
    </location>
    <ligand>
        <name>Zn(2+)</name>
        <dbReference type="ChEBI" id="CHEBI:29105"/>
    </ligand>
</feature>
<protein>
    <recommendedName>
        <fullName evidence="1">DNA-directed RNA polymerase subunit Rpo10</fullName>
        <ecNumber evidence="1">2.7.7.6</ecNumber>
    </recommendedName>
    <alternativeName>
        <fullName evidence="1">DNA-directed RNA polymerase subunit N</fullName>
    </alternativeName>
</protein>
<accession>P29199</accession>
<accession>Q5V5Q5</accession>
<gene>
    <name evidence="1" type="primary">rpo10</name>
    <name evidence="1" type="synonym">rpoN</name>
    <name type="ordered locus">rrnAC0067</name>
</gene>
<keyword id="KW-0963">Cytoplasm</keyword>
<keyword id="KW-0240">DNA-directed RNA polymerase</keyword>
<keyword id="KW-0479">Metal-binding</keyword>
<keyword id="KW-0548">Nucleotidyltransferase</keyword>
<keyword id="KW-1185">Reference proteome</keyword>
<keyword id="KW-0804">Transcription</keyword>
<keyword id="KW-0808">Transferase</keyword>
<keyword id="KW-0862">Zinc</keyword>
<evidence type="ECO:0000255" key="1">
    <source>
        <dbReference type="HAMAP-Rule" id="MF_00250"/>
    </source>
</evidence>
<reference key="1">
    <citation type="journal article" date="1991" name="J. Biol. Chem.">
        <title>Halobacterial S9 operon. Three ribosomal protein genes are cotranscribed with genes encoding a tRNA(Leu), the enolase, and a putative membrane protein in the archaebacterium Haloarcula (Halobacterium) marismortui.</title>
        <authorList>
            <person name="Kroemer W.J."/>
            <person name="Arndt E."/>
        </authorList>
    </citation>
    <scope>NUCLEOTIDE SEQUENCE [GENOMIC DNA]</scope>
</reference>
<reference key="2">
    <citation type="journal article" date="2004" name="Genome Res.">
        <title>Genome sequence of Haloarcula marismortui: a halophilic archaeon from the Dead Sea.</title>
        <authorList>
            <person name="Baliga N.S."/>
            <person name="Bonneau R."/>
            <person name="Facciotti M.T."/>
            <person name="Pan M."/>
            <person name="Glusman G."/>
            <person name="Deutsch E.W."/>
            <person name="Shannon P."/>
            <person name="Chiu Y."/>
            <person name="Weng R.S."/>
            <person name="Gan R.R."/>
            <person name="Hung P."/>
            <person name="Date S.V."/>
            <person name="Marcotte E."/>
            <person name="Hood L."/>
            <person name="Ng W.V."/>
        </authorList>
    </citation>
    <scope>NUCLEOTIDE SEQUENCE [LARGE SCALE GENOMIC DNA]</scope>
    <source>
        <strain>ATCC 43049 / DSM 3752 / JCM 8966 / VKM B-1809</strain>
    </source>
</reference>
<reference key="3">
    <citation type="journal article" date="1994" name="J. Bacteriol.">
        <title>Halobacterial S9 operon contains two genes encoding proteins homologous to subunits shared by eukaryotic RNA polymerases I, II, and III.</title>
        <authorList>
            <person name="McKune K."/>
            <person name="Woychik N.A."/>
        </authorList>
    </citation>
    <scope>SIMILARITY</scope>
</reference>
<comment type="function">
    <text evidence="1">DNA-dependent RNA polymerase (RNAP) catalyzes the transcription of DNA into RNA using the four ribonucleoside triphosphates as substrates.</text>
</comment>
<comment type="catalytic activity">
    <reaction evidence="1">
        <text>RNA(n) + a ribonucleoside 5'-triphosphate = RNA(n+1) + diphosphate</text>
        <dbReference type="Rhea" id="RHEA:21248"/>
        <dbReference type="Rhea" id="RHEA-COMP:14527"/>
        <dbReference type="Rhea" id="RHEA-COMP:17342"/>
        <dbReference type="ChEBI" id="CHEBI:33019"/>
        <dbReference type="ChEBI" id="CHEBI:61557"/>
        <dbReference type="ChEBI" id="CHEBI:140395"/>
        <dbReference type="EC" id="2.7.7.6"/>
    </reaction>
</comment>
<comment type="cofactor">
    <cofactor evidence="1">
        <name>Zn(2+)</name>
        <dbReference type="ChEBI" id="CHEBI:29105"/>
    </cofactor>
    <text evidence="1">Binds 1 zinc ion.</text>
</comment>
<comment type="subunit">
    <text evidence="1">Part of the RNA polymerase complex.</text>
</comment>
<comment type="subcellular location">
    <subcellularLocation>
        <location evidence="1">Cytoplasm</location>
    </subcellularLocation>
</comment>
<comment type="similarity">
    <text evidence="1">Belongs to the archaeal Rpo10/eukaryotic RPB10 RNA polymerase subunit family.</text>
</comment>
<sequence>MMVPVRCFTCGNVVGEHWEEFKARTREAEEPEDPEKVLDELGVERHCCRRMLVSHKDLVDIVSPYQ</sequence>
<proteinExistence type="inferred from homology"/>